<gene>
    <name evidence="1" type="primary">sucD</name>
    <name type="ordered locus">SAV1246</name>
</gene>
<organism>
    <name type="scientific">Staphylococcus aureus (strain Mu50 / ATCC 700699)</name>
    <dbReference type="NCBI Taxonomy" id="158878"/>
    <lineage>
        <taxon>Bacteria</taxon>
        <taxon>Bacillati</taxon>
        <taxon>Bacillota</taxon>
        <taxon>Bacilli</taxon>
        <taxon>Bacillales</taxon>
        <taxon>Staphylococcaceae</taxon>
        <taxon>Staphylococcus</taxon>
    </lineage>
</organism>
<proteinExistence type="inferred from homology"/>
<evidence type="ECO:0000255" key="1">
    <source>
        <dbReference type="HAMAP-Rule" id="MF_01988"/>
    </source>
</evidence>
<dbReference type="EC" id="6.2.1.5" evidence="1"/>
<dbReference type="EMBL" id="BA000017">
    <property type="protein sequence ID" value="BAB57408.1"/>
    <property type="molecule type" value="Genomic_DNA"/>
</dbReference>
<dbReference type="RefSeq" id="WP_000110253.1">
    <property type="nucleotide sequence ID" value="NC_002758.2"/>
</dbReference>
<dbReference type="SMR" id="P66866"/>
<dbReference type="GeneID" id="98345561"/>
<dbReference type="KEGG" id="sav:SAV1246"/>
<dbReference type="HOGENOM" id="CLU_052104_0_0_9"/>
<dbReference type="PhylomeDB" id="P66866"/>
<dbReference type="UniPathway" id="UPA00223">
    <property type="reaction ID" value="UER00999"/>
</dbReference>
<dbReference type="Proteomes" id="UP000002481">
    <property type="component" value="Chromosome"/>
</dbReference>
<dbReference type="GO" id="GO:0005829">
    <property type="term" value="C:cytosol"/>
    <property type="evidence" value="ECO:0007669"/>
    <property type="project" value="TreeGrafter"/>
</dbReference>
<dbReference type="GO" id="GO:0009361">
    <property type="term" value="C:succinate-CoA ligase complex (ADP-forming)"/>
    <property type="evidence" value="ECO:0007669"/>
    <property type="project" value="TreeGrafter"/>
</dbReference>
<dbReference type="GO" id="GO:0000166">
    <property type="term" value="F:nucleotide binding"/>
    <property type="evidence" value="ECO:0007669"/>
    <property type="project" value="UniProtKB-KW"/>
</dbReference>
<dbReference type="GO" id="GO:0004775">
    <property type="term" value="F:succinate-CoA ligase (ADP-forming) activity"/>
    <property type="evidence" value="ECO:0007669"/>
    <property type="project" value="UniProtKB-UniRule"/>
</dbReference>
<dbReference type="GO" id="GO:0004776">
    <property type="term" value="F:succinate-CoA ligase (GDP-forming) activity"/>
    <property type="evidence" value="ECO:0007669"/>
    <property type="project" value="RHEA"/>
</dbReference>
<dbReference type="GO" id="GO:0006099">
    <property type="term" value="P:tricarboxylic acid cycle"/>
    <property type="evidence" value="ECO:0007669"/>
    <property type="project" value="UniProtKB-UniRule"/>
</dbReference>
<dbReference type="FunFam" id="3.40.50.261:FF:000002">
    <property type="entry name" value="Succinate--CoA ligase [ADP-forming] subunit alpha"/>
    <property type="match status" value="1"/>
</dbReference>
<dbReference type="FunFam" id="3.40.50.720:FF:000002">
    <property type="entry name" value="Succinate--CoA ligase [ADP-forming] subunit alpha"/>
    <property type="match status" value="1"/>
</dbReference>
<dbReference type="Gene3D" id="3.40.50.720">
    <property type="entry name" value="NAD(P)-binding Rossmann-like Domain"/>
    <property type="match status" value="1"/>
</dbReference>
<dbReference type="Gene3D" id="3.40.50.261">
    <property type="entry name" value="Succinyl-CoA synthetase domains"/>
    <property type="match status" value="1"/>
</dbReference>
<dbReference type="HAMAP" id="MF_01988">
    <property type="entry name" value="Succ_CoA_alpha"/>
    <property type="match status" value="1"/>
</dbReference>
<dbReference type="InterPro" id="IPR017440">
    <property type="entry name" value="Cit_synth/succinyl-CoA_lig_AS"/>
</dbReference>
<dbReference type="InterPro" id="IPR033847">
    <property type="entry name" value="Citrt_syn/SCS-alpha_CS"/>
</dbReference>
<dbReference type="InterPro" id="IPR003781">
    <property type="entry name" value="CoA-bd"/>
</dbReference>
<dbReference type="InterPro" id="IPR005810">
    <property type="entry name" value="CoA_lig_alpha"/>
</dbReference>
<dbReference type="InterPro" id="IPR036291">
    <property type="entry name" value="NAD(P)-bd_dom_sf"/>
</dbReference>
<dbReference type="InterPro" id="IPR005811">
    <property type="entry name" value="SUCC_ACL_C"/>
</dbReference>
<dbReference type="InterPro" id="IPR016102">
    <property type="entry name" value="Succinyl-CoA_synth-like"/>
</dbReference>
<dbReference type="NCBIfam" id="NF004230">
    <property type="entry name" value="PRK05678.1"/>
    <property type="match status" value="1"/>
</dbReference>
<dbReference type="NCBIfam" id="TIGR01019">
    <property type="entry name" value="sucCoAalpha"/>
    <property type="match status" value="1"/>
</dbReference>
<dbReference type="PANTHER" id="PTHR11117:SF2">
    <property type="entry name" value="SUCCINATE--COA LIGASE [ADP_GDP-FORMING] SUBUNIT ALPHA, MITOCHONDRIAL"/>
    <property type="match status" value="1"/>
</dbReference>
<dbReference type="PANTHER" id="PTHR11117">
    <property type="entry name" value="SUCCINYL-COA LIGASE SUBUNIT ALPHA"/>
    <property type="match status" value="1"/>
</dbReference>
<dbReference type="Pfam" id="PF02629">
    <property type="entry name" value="CoA_binding"/>
    <property type="match status" value="1"/>
</dbReference>
<dbReference type="Pfam" id="PF00549">
    <property type="entry name" value="Ligase_CoA"/>
    <property type="match status" value="1"/>
</dbReference>
<dbReference type="PIRSF" id="PIRSF001553">
    <property type="entry name" value="SucCS_alpha"/>
    <property type="match status" value="1"/>
</dbReference>
<dbReference type="PRINTS" id="PR01798">
    <property type="entry name" value="SCOASYNTHASE"/>
</dbReference>
<dbReference type="SMART" id="SM00881">
    <property type="entry name" value="CoA_binding"/>
    <property type="match status" value="1"/>
</dbReference>
<dbReference type="SUPFAM" id="SSF51735">
    <property type="entry name" value="NAD(P)-binding Rossmann-fold domains"/>
    <property type="match status" value="1"/>
</dbReference>
<dbReference type="SUPFAM" id="SSF52210">
    <property type="entry name" value="Succinyl-CoA synthetase domains"/>
    <property type="match status" value="1"/>
</dbReference>
<dbReference type="PROSITE" id="PS01216">
    <property type="entry name" value="SUCCINYL_COA_LIG_1"/>
    <property type="match status" value="1"/>
</dbReference>
<dbReference type="PROSITE" id="PS00399">
    <property type="entry name" value="SUCCINYL_COA_LIG_2"/>
    <property type="match status" value="1"/>
</dbReference>
<protein>
    <recommendedName>
        <fullName evidence="1">Succinate--CoA ligase [ADP-forming] subunit alpha</fullName>
        <ecNumber evidence="1">6.2.1.5</ecNumber>
    </recommendedName>
    <alternativeName>
        <fullName evidence="1">Succinyl-CoA synthetase subunit alpha</fullName>
        <shortName evidence="1">SCS-alpha</shortName>
    </alternativeName>
</protein>
<comment type="function">
    <text evidence="1">Succinyl-CoA synthetase functions in the citric acid cycle (TCA), coupling the hydrolysis of succinyl-CoA to the synthesis of either ATP or GTP and thus represents the only step of substrate-level phosphorylation in the TCA. The alpha subunit of the enzyme binds the substrates coenzyme A and phosphate, while succinate binding and nucleotide specificity is provided by the beta subunit.</text>
</comment>
<comment type="catalytic activity">
    <reaction evidence="1">
        <text>succinate + ATP + CoA = succinyl-CoA + ADP + phosphate</text>
        <dbReference type="Rhea" id="RHEA:17661"/>
        <dbReference type="ChEBI" id="CHEBI:30031"/>
        <dbReference type="ChEBI" id="CHEBI:30616"/>
        <dbReference type="ChEBI" id="CHEBI:43474"/>
        <dbReference type="ChEBI" id="CHEBI:57287"/>
        <dbReference type="ChEBI" id="CHEBI:57292"/>
        <dbReference type="ChEBI" id="CHEBI:456216"/>
        <dbReference type="EC" id="6.2.1.5"/>
    </reaction>
    <physiologicalReaction direction="right-to-left" evidence="1">
        <dbReference type="Rhea" id="RHEA:17663"/>
    </physiologicalReaction>
</comment>
<comment type="catalytic activity">
    <reaction evidence="1">
        <text>GTP + succinate + CoA = succinyl-CoA + GDP + phosphate</text>
        <dbReference type="Rhea" id="RHEA:22120"/>
        <dbReference type="ChEBI" id="CHEBI:30031"/>
        <dbReference type="ChEBI" id="CHEBI:37565"/>
        <dbReference type="ChEBI" id="CHEBI:43474"/>
        <dbReference type="ChEBI" id="CHEBI:57287"/>
        <dbReference type="ChEBI" id="CHEBI:57292"/>
        <dbReference type="ChEBI" id="CHEBI:58189"/>
    </reaction>
    <physiologicalReaction direction="right-to-left" evidence="1">
        <dbReference type="Rhea" id="RHEA:22122"/>
    </physiologicalReaction>
</comment>
<comment type="pathway">
    <text evidence="1">Carbohydrate metabolism; tricarboxylic acid cycle; succinate from succinyl-CoA (ligase route): step 1/1.</text>
</comment>
<comment type="subunit">
    <text evidence="1">Heterotetramer of two alpha and two beta subunits.</text>
</comment>
<comment type="similarity">
    <text evidence="1">Belongs to the succinate/malate CoA ligase alpha subunit family.</text>
</comment>
<feature type="chain" id="PRO_0000102800" description="Succinate--CoA ligase [ADP-forming] subunit alpha">
    <location>
        <begin position="1"/>
        <end position="302"/>
    </location>
</feature>
<feature type="active site" description="Tele-phosphohistidine intermediate" evidence="1">
    <location>
        <position position="247"/>
    </location>
</feature>
<feature type="binding site" evidence="1">
    <location>
        <begin position="17"/>
        <end position="20"/>
    </location>
    <ligand>
        <name>CoA</name>
        <dbReference type="ChEBI" id="CHEBI:57287"/>
    </ligand>
</feature>
<feature type="binding site" evidence="1">
    <location>
        <position position="43"/>
    </location>
    <ligand>
        <name>CoA</name>
        <dbReference type="ChEBI" id="CHEBI:57287"/>
    </ligand>
</feature>
<feature type="binding site" evidence="1">
    <location>
        <begin position="96"/>
        <end position="98"/>
    </location>
    <ligand>
        <name>CoA</name>
        <dbReference type="ChEBI" id="CHEBI:57287"/>
    </ligand>
</feature>
<feature type="binding site" evidence="1">
    <location>
        <position position="159"/>
    </location>
    <ligand>
        <name>substrate</name>
        <note>ligand shared with subunit beta</note>
    </ligand>
</feature>
<reference key="1">
    <citation type="journal article" date="2001" name="Lancet">
        <title>Whole genome sequencing of meticillin-resistant Staphylococcus aureus.</title>
        <authorList>
            <person name="Kuroda M."/>
            <person name="Ohta T."/>
            <person name="Uchiyama I."/>
            <person name="Baba T."/>
            <person name="Yuzawa H."/>
            <person name="Kobayashi I."/>
            <person name="Cui L."/>
            <person name="Oguchi A."/>
            <person name="Aoki K."/>
            <person name="Nagai Y."/>
            <person name="Lian J.-Q."/>
            <person name="Ito T."/>
            <person name="Kanamori M."/>
            <person name="Matsumaru H."/>
            <person name="Maruyama A."/>
            <person name="Murakami H."/>
            <person name="Hosoyama A."/>
            <person name="Mizutani-Ui Y."/>
            <person name="Takahashi N.K."/>
            <person name="Sawano T."/>
            <person name="Inoue R."/>
            <person name="Kaito C."/>
            <person name="Sekimizu K."/>
            <person name="Hirakawa H."/>
            <person name="Kuhara S."/>
            <person name="Goto S."/>
            <person name="Yabuzaki J."/>
            <person name="Kanehisa M."/>
            <person name="Yamashita A."/>
            <person name="Oshima K."/>
            <person name="Furuya K."/>
            <person name="Yoshino C."/>
            <person name="Shiba T."/>
            <person name="Hattori M."/>
            <person name="Ogasawara N."/>
            <person name="Hayashi H."/>
            <person name="Hiramatsu K."/>
        </authorList>
    </citation>
    <scope>NUCLEOTIDE SEQUENCE [LARGE SCALE GENOMIC DNA]</scope>
    <source>
        <strain>Mu50 / ATCC 700699</strain>
    </source>
</reference>
<name>SUCD_STAAM</name>
<accession>P66866</accession>
<accession>Q99UM4</accession>
<sequence>MSVFIDKNTKVMVQGITGSTALFHTKQMLDYGTKIVAGVTPGKGGQVVEGVPVFNTVEEAKNETGATVSVIYVPAPFAADSILEAADADLDMVICITEHIPVLDMVKVKRYLQGRKTRLVGPNCPGVITADECKIGIMPGYIHKKGHVGVVSRSGTLTYEAVHQLTEEGIGQTTAVGIGGDPVNGTNFIDVLKAFNEDDETKAVVMIGEIGGTAEEEAAEWIKANMTKPVVGFIGGQTAPPGKRMGHAGAIISGGKGTAEEKIKTLNSCGVKTAATPSEIGSTLIEAAKEAGIYESLLTVNK</sequence>
<keyword id="KW-0436">Ligase</keyword>
<keyword id="KW-0547">Nucleotide-binding</keyword>
<keyword id="KW-0816">Tricarboxylic acid cycle</keyword>